<gene>
    <name type="primary">CRS5</name>
    <name type="ORF">EC1118_1O4_2256g</name>
</gene>
<proteinExistence type="inferred from homology"/>
<reference key="1">
    <citation type="journal article" date="2009" name="Proc. Natl. Acad. Sci. U.S.A.">
        <title>Eukaryote-to-eukaryote gene transfer events revealed by the genome sequence of the wine yeast Saccharomyces cerevisiae EC1118.</title>
        <authorList>
            <person name="Novo M."/>
            <person name="Bigey F."/>
            <person name="Beyne E."/>
            <person name="Galeote V."/>
            <person name="Gavory F."/>
            <person name="Mallet S."/>
            <person name="Cambon B."/>
            <person name="Legras J.-L."/>
            <person name="Wincker P."/>
            <person name="Casaregola S."/>
            <person name="Dequin S."/>
        </authorList>
    </citation>
    <scope>NUCLEOTIDE SEQUENCE [LARGE SCALE GENOMIC DNA]</scope>
    <source>
        <strain>Lalvin EC1118 / Prise de mousse</strain>
    </source>
</reference>
<name>CRS5_YEAS8</name>
<feature type="chain" id="PRO_0000392089" description="Metallothionein-like protein CRS5">
    <location>
        <begin position="1"/>
        <end position="69"/>
    </location>
</feature>
<protein>
    <recommendedName>
        <fullName>Metallothionein-like protein CRS5</fullName>
    </recommendedName>
</protein>
<evidence type="ECO:0000250" key="1"/>
<evidence type="ECO:0000305" key="2"/>
<accession>C8ZHZ1</accession>
<keyword id="KW-0186">Copper</keyword>
<keyword id="KW-0479">Metal-binding</keyword>
<keyword id="KW-0480">Metal-thiolate cluster</keyword>
<sequence length="69" mass="7321">MTVKICDCEGECCKDSCHCGSTCLPSCSGGEKCKCDHSTGSPQCKSCGEKCKCETTCTCEKSKCNCEKC</sequence>
<comment type="function">
    <text evidence="1">Critical role in copper (specific) homeostasis and detoxification. May protect by directly chelating and sequestering copper ions (By similarity).</text>
</comment>
<comment type="similarity">
    <text evidence="2">Belongs to the metallothionein superfamily. Type 13 family.</text>
</comment>
<dbReference type="EMBL" id="FN394216">
    <property type="protein sequence ID" value="CAY86316.1"/>
    <property type="molecule type" value="Genomic_DNA"/>
</dbReference>
<dbReference type="SMR" id="C8ZHZ1"/>
<dbReference type="HOGENOM" id="CLU_2777367_0_0_1"/>
<dbReference type="OrthoDB" id="43068at4893"/>
<dbReference type="Proteomes" id="UP000000286">
    <property type="component" value="Chromosome XV, Scaffold EC1118_1O4"/>
</dbReference>
<dbReference type="GO" id="GO:0046872">
    <property type="term" value="F:metal ion binding"/>
    <property type="evidence" value="ECO:0007669"/>
    <property type="project" value="UniProtKB-KW"/>
</dbReference>
<dbReference type="InterPro" id="IPR035715">
    <property type="entry name" value="Crs5"/>
</dbReference>
<dbReference type="Pfam" id="PF12809">
    <property type="entry name" value="Metallothi_Euk2"/>
    <property type="match status" value="1"/>
</dbReference>
<organism>
    <name type="scientific">Saccharomyces cerevisiae (strain Lalvin EC1118 / Prise de mousse)</name>
    <name type="common">Baker's yeast</name>
    <dbReference type="NCBI Taxonomy" id="643680"/>
    <lineage>
        <taxon>Eukaryota</taxon>
        <taxon>Fungi</taxon>
        <taxon>Dikarya</taxon>
        <taxon>Ascomycota</taxon>
        <taxon>Saccharomycotina</taxon>
        <taxon>Saccharomycetes</taxon>
        <taxon>Saccharomycetales</taxon>
        <taxon>Saccharomycetaceae</taxon>
        <taxon>Saccharomyces</taxon>
    </lineage>
</organism>